<organism>
    <name type="scientific">Chelativorans sp. (strain BNC1)</name>
    <dbReference type="NCBI Taxonomy" id="266779"/>
    <lineage>
        <taxon>Bacteria</taxon>
        <taxon>Pseudomonadati</taxon>
        <taxon>Pseudomonadota</taxon>
        <taxon>Alphaproteobacteria</taxon>
        <taxon>Hyphomicrobiales</taxon>
        <taxon>Phyllobacteriaceae</taxon>
        <taxon>Chelativorans</taxon>
    </lineage>
</organism>
<protein>
    <recommendedName>
        <fullName evidence="1">Protein GrpE</fullName>
    </recommendedName>
    <alternativeName>
        <fullName evidence="1">HSP-70 cofactor</fullName>
    </alternativeName>
</protein>
<accession>Q11B39</accession>
<keyword id="KW-0143">Chaperone</keyword>
<keyword id="KW-0963">Cytoplasm</keyword>
<keyword id="KW-0346">Stress response</keyword>
<comment type="function">
    <text evidence="1">Participates actively in the response to hyperosmotic and heat shock by preventing the aggregation of stress-denatured proteins, in association with DnaK and GrpE. It is the nucleotide exchange factor for DnaK and may function as a thermosensor. Unfolded proteins bind initially to DnaJ; upon interaction with the DnaJ-bound protein, DnaK hydrolyzes its bound ATP, resulting in the formation of a stable complex. GrpE releases ADP from DnaK; ATP binding to DnaK triggers the release of the substrate protein, thus completing the reaction cycle. Several rounds of ATP-dependent interactions between DnaJ, DnaK and GrpE are required for fully efficient folding.</text>
</comment>
<comment type="subunit">
    <text evidence="1">Homodimer.</text>
</comment>
<comment type="subcellular location">
    <subcellularLocation>
        <location evidence="1">Cytoplasm</location>
    </subcellularLocation>
</comment>
<comment type="similarity">
    <text evidence="1">Belongs to the GrpE family.</text>
</comment>
<evidence type="ECO:0000255" key="1">
    <source>
        <dbReference type="HAMAP-Rule" id="MF_01151"/>
    </source>
</evidence>
<evidence type="ECO:0000256" key="2">
    <source>
        <dbReference type="SAM" id="MobiDB-lite"/>
    </source>
</evidence>
<sequence>MNDGFAMNTHSKDERAPENGQAENMAVENGAEAAQAADRATPVSEEDVLLRLAKENEDLKERALRLTAEMENLRKRTQRDVADARVYGIANFARDMLTVSDNLQRALQAVSEEARAQADSGLKALVEGVEMTERAMLATLERHGVKRVDPNGEKFDPHFHQAMFEVPNADVPNNTVVQVVQPGYVIGDRVLRPAMVGVAKGGPKAETPAATSEQAAQGPEGA</sequence>
<feature type="chain" id="PRO_1000137584" description="Protein GrpE">
    <location>
        <begin position="1"/>
        <end position="222"/>
    </location>
</feature>
<feature type="region of interest" description="Disordered" evidence="2">
    <location>
        <begin position="1"/>
        <end position="21"/>
    </location>
</feature>
<feature type="region of interest" description="Disordered" evidence="2">
    <location>
        <begin position="200"/>
        <end position="222"/>
    </location>
</feature>
<proteinExistence type="inferred from homology"/>
<reference key="1">
    <citation type="submission" date="2006-06" db="EMBL/GenBank/DDBJ databases">
        <title>Complete sequence of chromosome of Mesorhizobium sp. BNC1.</title>
        <authorList>
            <consortium name="US DOE Joint Genome Institute"/>
            <person name="Copeland A."/>
            <person name="Lucas S."/>
            <person name="Lapidus A."/>
            <person name="Barry K."/>
            <person name="Detter J.C."/>
            <person name="Glavina del Rio T."/>
            <person name="Hammon N."/>
            <person name="Israni S."/>
            <person name="Dalin E."/>
            <person name="Tice H."/>
            <person name="Pitluck S."/>
            <person name="Chertkov O."/>
            <person name="Brettin T."/>
            <person name="Bruce D."/>
            <person name="Han C."/>
            <person name="Tapia R."/>
            <person name="Gilna P."/>
            <person name="Schmutz J."/>
            <person name="Larimer F."/>
            <person name="Land M."/>
            <person name="Hauser L."/>
            <person name="Kyrpides N."/>
            <person name="Mikhailova N."/>
            <person name="Richardson P."/>
        </authorList>
    </citation>
    <scope>NUCLEOTIDE SEQUENCE [LARGE SCALE GENOMIC DNA]</scope>
    <source>
        <strain>BNC1</strain>
    </source>
</reference>
<name>GRPE_CHESB</name>
<gene>
    <name evidence="1" type="primary">grpE</name>
    <name type="ordered locus">Meso_4019</name>
</gene>
<dbReference type="EMBL" id="CP000390">
    <property type="protein sequence ID" value="ABG65386.1"/>
    <property type="molecule type" value="Genomic_DNA"/>
</dbReference>
<dbReference type="SMR" id="Q11B39"/>
<dbReference type="STRING" id="266779.Meso_4019"/>
<dbReference type="KEGG" id="mes:Meso_4019"/>
<dbReference type="eggNOG" id="COG0576">
    <property type="taxonomic scope" value="Bacteria"/>
</dbReference>
<dbReference type="HOGENOM" id="CLU_057217_6_2_5"/>
<dbReference type="OrthoDB" id="9789811at2"/>
<dbReference type="GO" id="GO:0005737">
    <property type="term" value="C:cytoplasm"/>
    <property type="evidence" value="ECO:0007669"/>
    <property type="project" value="UniProtKB-SubCell"/>
</dbReference>
<dbReference type="GO" id="GO:0000774">
    <property type="term" value="F:adenyl-nucleotide exchange factor activity"/>
    <property type="evidence" value="ECO:0007669"/>
    <property type="project" value="InterPro"/>
</dbReference>
<dbReference type="GO" id="GO:0042803">
    <property type="term" value="F:protein homodimerization activity"/>
    <property type="evidence" value="ECO:0007669"/>
    <property type="project" value="InterPro"/>
</dbReference>
<dbReference type="GO" id="GO:0051087">
    <property type="term" value="F:protein-folding chaperone binding"/>
    <property type="evidence" value="ECO:0007669"/>
    <property type="project" value="InterPro"/>
</dbReference>
<dbReference type="GO" id="GO:0051082">
    <property type="term" value="F:unfolded protein binding"/>
    <property type="evidence" value="ECO:0007669"/>
    <property type="project" value="TreeGrafter"/>
</dbReference>
<dbReference type="GO" id="GO:0006457">
    <property type="term" value="P:protein folding"/>
    <property type="evidence" value="ECO:0007669"/>
    <property type="project" value="InterPro"/>
</dbReference>
<dbReference type="CDD" id="cd00446">
    <property type="entry name" value="GrpE"/>
    <property type="match status" value="1"/>
</dbReference>
<dbReference type="FunFam" id="2.30.22.10:FF:000001">
    <property type="entry name" value="Protein GrpE"/>
    <property type="match status" value="1"/>
</dbReference>
<dbReference type="Gene3D" id="3.90.20.20">
    <property type="match status" value="1"/>
</dbReference>
<dbReference type="Gene3D" id="2.30.22.10">
    <property type="entry name" value="Head domain of nucleotide exchange factor GrpE"/>
    <property type="match status" value="1"/>
</dbReference>
<dbReference type="HAMAP" id="MF_01151">
    <property type="entry name" value="GrpE"/>
    <property type="match status" value="1"/>
</dbReference>
<dbReference type="InterPro" id="IPR000740">
    <property type="entry name" value="GrpE"/>
</dbReference>
<dbReference type="InterPro" id="IPR013805">
    <property type="entry name" value="GrpE_coiled_coil"/>
</dbReference>
<dbReference type="InterPro" id="IPR009012">
    <property type="entry name" value="GrpE_head"/>
</dbReference>
<dbReference type="NCBIfam" id="NF010738">
    <property type="entry name" value="PRK14140.1"/>
    <property type="match status" value="1"/>
</dbReference>
<dbReference type="NCBIfam" id="NF010739">
    <property type="entry name" value="PRK14141.1"/>
    <property type="match status" value="1"/>
</dbReference>
<dbReference type="NCBIfam" id="NF010748">
    <property type="entry name" value="PRK14150.1"/>
    <property type="match status" value="1"/>
</dbReference>
<dbReference type="PANTHER" id="PTHR21237">
    <property type="entry name" value="GRPE PROTEIN"/>
    <property type="match status" value="1"/>
</dbReference>
<dbReference type="PANTHER" id="PTHR21237:SF23">
    <property type="entry name" value="GRPE PROTEIN HOMOLOG, MITOCHONDRIAL"/>
    <property type="match status" value="1"/>
</dbReference>
<dbReference type="Pfam" id="PF01025">
    <property type="entry name" value="GrpE"/>
    <property type="match status" value="1"/>
</dbReference>
<dbReference type="PRINTS" id="PR00773">
    <property type="entry name" value="GRPEPROTEIN"/>
</dbReference>
<dbReference type="SUPFAM" id="SSF58014">
    <property type="entry name" value="Coiled-coil domain of nucleotide exchange factor GrpE"/>
    <property type="match status" value="1"/>
</dbReference>
<dbReference type="SUPFAM" id="SSF51064">
    <property type="entry name" value="Head domain of nucleotide exchange factor GrpE"/>
    <property type="match status" value="1"/>
</dbReference>
<dbReference type="PROSITE" id="PS01071">
    <property type="entry name" value="GRPE"/>
    <property type="match status" value="1"/>
</dbReference>